<protein>
    <recommendedName>
        <fullName evidence="1">Small ribosomal subunit protein uS3</fullName>
    </recommendedName>
    <alternativeName>
        <fullName evidence="3">30S ribosomal protein S3</fullName>
    </alternativeName>
</protein>
<feature type="chain" id="PRO_0000323296" description="Small ribosomal subunit protein uS3">
    <location>
        <begin position="1"/>
        <end position="235"/>
    </location>
</feature>
<feature type="domain" description="KH type-2" evidence="1">
    <location>
        <begin position="39"/>
        <end position="107"/>
    </location>
</feature>
<feature type="region of interest" description="Disordered" evidence="2">
    <location>
        <begin position="215"/>
        <end position="235"/>
    </location>
</feature>
<sequence length="235" mass="25879">MGQKVHPHGIRLGIVKPWSSTWFANTQDFADNLEGDFKVRKFLNKELANASVSRITIERPAKSIRVTIHTARPGIVIGKKGEDVEKLRNAVSKIAGVPAQINIAEVKKPELDAKLVADSIASQLERRVMFRRAMKRAVQSAMRLGAKGIKVEVSGRLGGAEIARSEWYREGRVPLHTLRADIDYNTAEAHTTYGVIGVKVWIFKGEILGGMAAVAQSEQQPADKPKKAPRGKGRK</sequence>
<keyword id="KW-0687">Ribonucleoprotein</keyword>
<keyword id="KW-0689">Ribosomal protein</keyword>
<keyword id="KW-0694">RNA-binding</keyword>
<keyword id="KW-0699">rRNA-binding</keyword>
<dbReference type="EMBL" id="CP000672">
    <property type="protein sequence ID" value="ABR00342.1"/>
    <property type="molecule type" value="Genomic_DNA"/>
</dbReference>
<dbReference type="SMR" id="A5UHT6"/>
<dbReference type="KEGG" id="hiq:CGSHiGG_07415"/>
<dbReference type="HOGENOM" id="CLU_058591_0_2_6"/>
<dbReference type="Proteomes" id="UP000001990">
    <property type="component" value="Chromosome"/>
</dbReference>
<dbReference type="GO" id="GO:0022627">
    <property type="term" value="C:cytosolic small ribosomal subunit"/>
    <property type="evidence" value="ECO:0007669"/>
    <property type="project" value="TreeGrafter"/>
</dbReference>
<dbReference type="GO" id="GO:0003729">
    <property type="term" value="F:mRNA binding"/>
    <property type="evidence" value="ECO:0007669"/>
    <property type="project" value="UniProtKB-UniRule"/>
</dbReference>
<dbReference type="GO" id="GO:0019843">
    <property type="term" value="F:rRNA binding"/>
    <property type="evidence" value="ECO:0007669"/>
    <property type="project" value="UniProtKB-UniRule"/>
</dbReference>
<dbReference type="GO" id="GO:0003735">
    <property type="term" value="F:structural constituent of ribosome"/>
    <property type="evidence" value="ECO:0007669"/>
    <property type="project" value="InterPro"/>
</dbReference>
<dbReference type="GO" id="GO:0006412">
    <property type="term" value="P:translation"/>
    <property type="evidence" value="ECO:0007669"/>
    <property type="project" value="UniProtKB-UniRule"/>
</dbReference>
<dbReference type="CDD" id="cd02412">
    <property type="entry name" value="KH-II_30S_S3"/>
    <property type="match status" value="1"/>
</dbReference>
<dbReference type="FunFam" id="3.30.1140.32:FF:000001">
    <property type="entry name" value="30S ribosomal protein S3"/>
    <property type="match status" value="1"/>
</dbReference>
<dbReference type="FunFam" id="3.30.300.20:FF:000001">
    <property type="entry name" value="30S ribosomal protein S3"/>
    <property type="match status" value="1"/>
</dbReference>
<dbReference type="Gene3D" id="3.30.300.20">
    <property type="match status" value="1"/>
</dbReference>
<dbReference type="Gene3D" id="3.30.1140.32">
    <property type="entry name" value="Ribosomal protein S3, C-terminal domain"/>
    <property type="match status" value="1"/>
</dbReference>
<dbReference type="HAMAP" id="MF_01309_B">
    <property type="entry name" value="Ribosomal_uS3_B"/>
    <property type="match status" value="1"/>
</dbReference>
<dbReference type="InterPro" id="IPR004087">
    <property type="entry name" value="KH_dom"/>
</dbReference>
<dbReference type="InterPro" id="IPR015946">
    <property type="entry name" value="KH_dom-like_a/b"/>
</dbReference>
<dbReference type="InterPro" id="IPR004044">
    <property type="entry name" value="KH_dom_type_2"/>
</dbReference>
<dbReference type="InterPro" id="IPR009019">
    <property type="entry name" value="KH_sf_prok-type"/>
</dbReference>
<dbReference type="InterPro" id="IPR036419">
    <property type="entry name" value="Ribosomal_S3_C_sf"/>
</dbReference>
<dbReference type="InterPro" id="IPR005704">
    <property type="entry name" value="Ribosomal_uS3_bac-typ"/>
</dbReference>
<dbReference type="InterPro" id="IPR001351">
    <property type="entry name" value="Ribosomal_uS3_C"/>
</dbReference>
<dbReference type="InterPro" id="IPR018280">
    <property type="entry name" value="Ribosomal_uS3_CS"/>
</dbReference>
<dbReference type="NCBIfam" id="TIGR01009">
    <property type="entry name" value="rpsC_bact"/>
    <property type="match status" value="1"/>
</dbReference>
<dbReference type="PANTHER" id="PTHR11760">
    <property type="entry name" value="30S/40S RIBOSOMAL PROTEIN S3"/>
    <property type="match status" value="1"/>
</dbReference>
<dbReference type="PANTHER" id="PTHR11760:SF19">
    <property type="entry name" value="SMALL RIBOSOMAL SUBUNIT PROTEIN US3C"/>
    <property type="match status" value="1"/>
</dbReference>
<dbReference type="Pfam" id="PF07650">
    <property type="entry name" value="KH_2"/>
    <property type="match status" value="1"/>
</dbReference>
<dbReference type="Pfam" id="PF00189">
    <property type="entry name" value="Ribosomal_S3_C"/>
    <property type="match status" value="1"/>
</dbReference>
<dbReference type="SMART" id="SM00322">
    <property type="entry name" value="KH"/>
    <property type="match status" value="1"/>
</dbReference>
<dbReference type="SUPFAM" id="SSF54814">
    <property type="entry name" value="Prokaryotic type KH domain (KH-domain type II)"/>
    <property type="match status" value="1"/>
</dbReference>
<dbReference type="SUPFAM" id="SSF54821">
    <property type="entry name" value="Ribosomal protein S3 C-terminal domain"/>
    <property type="match status" value="1"/>
</dbReference>
<dbReference type="PROSITE" id="PS50823">
    <property type="entry name" value="KH_TYPE_2"/>
    <property type="match status" value="1"/>
</dbReference>
<dbReference type="PROSITE" id="PS00548">
    <property type="entry name" value="RIBOSOMAL_S3"/>
    <property type="match status" value="1"/>
</dbReference>
<reference key="1">
    <citation type="journal article" date="2007" name="Genome Biol.">
        <title>Characterization and modeling of the Haemophilus influenzae core and supragenomes based on the complete genomic sequences of Rd and 12 clinical nontypeable strains.</title>
        <authorList>
            <person name="Hogg J.S."/>
            <person name="Hu F.Z."/>
            <person name="Janto B."/>
            <person name="Boissy R."/>
            <person name="Hayes J."/>
            <person name="Keefe R."/>
            <person name="Post J.C."/>
            <person name="Ehrlich G.D."/>
        </authorList>
    </citation>
    <scope>NUCLEOTIDE SEQUENCE [LARGE SCALE GENOMIC DNA]</scope>
    <source>
        <strain>PittGG</strain>
    </source>
</reference>
<name>RS3_HAEIG</name>
<organism>
    <name type="scientific">Haemophilus influenzae (strain PittGG)</name>
    <dbReference type="NCBI Taxonomy" id="374931"/>
    <lineage>
        <taxon>Bacteria</taxon>
        <taxon>Pseudomonadati</taxon>
        <taxon>Pseudomonadota</taxon>
        <taxon>Gammaproteobacteria</taxon>
        <taxon>Pasteurellales</taxon>
        <taxon>Pasteurellaceae</taxon>
        <taxon>Haemophilus</taxon>
    </lineage>
</organism>
<evidence type="ECO:0000255" key="1">
    <source>
        <dbReference type="HAMAP-Rule" id="MF_01309"/>
    </source>
</evidence>
<evidence type="ECO:0000256" key="2">
    <source>
        <dbReference type="SAM" id="MobiDB-lite"/>
    </source>
</evidence>
<evidence type="ECO:0000305" key="3"/>
<proteinExistence type="inferred from homology"/>
<accession>A5UHT6</accession>
<gene>
    <name evidence="1" type="primary">rpsC</name>
    <name type="ordered locus">CGSHiGG_07415</name>
</gene>
<comment type="function">
    <text evidence="1">Binds the lower part of the 30S subunit head. Binds mRNA in the 70S ribosome, positioning it for translation.</text>
</comment>
<comment type="subunit">
    <text evidence="1">Part of the 30S ribosomal subunit. Forms a tight complex with proteins S10 and S14.</text>
</comment>
<comment type="similarity">
    <text evidence="1">Belongs to the universal ribosomal protein uS3 family.</text>
</comment>